<sequence length="124" mass="14276">MRHYEIVFIVHPDQSEQVPAMIERYKSTITSHGGQIHRVEDWGRRQLAYMIEKLAKAHYVCMNIECDQTTLDELEHAFKFNDAVLRHLIVKMKKAETGPSPMMKEVQREEAKKAAAAQPAEAQA</sequence>
<proteinExistence type="inferred from homology"/>
<reference key="1">
    <citation type="submission" date="2008-02" db="EMBL/GenBank/DDBJ databases">
        <title>Complete sequence of chromosome 1 of Burkholderia cenocepacia MC0-3.</title>
        <authorList>
            <person name="Copeland A."/>
            <person name="Lucas S."/>
            <person name="Lapidus A."/>
            <person name="Barry K."/>
            <person name="Bruce D."/>
            <person name="Goodwin L."/>
            <person name="Glavina del Rio T."/>
            <person name="Dalin E."/>
            <person name="Tice H."/>
            <person name="Pitluck S."/>
            <person name="Chain P."/>
            <person name="Malfatti S."/>
            <person name="Shin M."/>
            <person name="Vergez L."/>
            <person name="Schmutz J."/>
            <person name="Larimer F."/>
            <person name="Land M."/>
            <person name="Hauser L."/>
            <person name="Kyrpides N."/>
            <person name="Mikhailova N."/>
            <person name="Tiedje J."/>
            <person name="Richardson P."/>
        </authorList>
    </citation>
    <scope>NUCLEOTIDE SEQUENCE [LARGE SCALE GENOMIC DNA]</scope>
    <source>
        <strain>MC0-3</strain>
    </source>
</reference>
<keyword id="KW-0687">Ribonucleoprotein</keyword>
<keyword id="KW-0689">Ribosomal protein</keyword>
<keyword id="KW-0694">RNA-binding</keyword>
<keyword id="KW-0699">rRNA-binding</keyword>
<gene>
    <name evidence="1" type="primary">rpsF</name>
    <name type="ordered locus">Bcenmc03_1897</name>
</gene>
<accession>B1JTF3</accession>
<feature type="chain" id="PRO_1000120717" description="Small ribosomal subunit protein bS6">
    <location>
        <begin position="1"/>
        <end position="124"/>
    </location>
</feature>
<feature type="region of interest" description="Disordered" evidence="2">
    <location>
        <begin position="96"/>
        <end position="124"/>
    </location>
</feature>
<feature type="compositionally biased region" description="Low complexity" evidence="2">
    <location>
        <begin position="114"/>
        <end position="124"/>
    </location>
</feature>
<protein>
    <recommendedName>
        <fullName evidence="1">Small ribosomal subunit protein bS6</fullName>
    </recommendedName>
    <alternativeName>
        <fullName evidence="3">30S ribosomal protein S6</fullName>
    </alternativeName>
</protein>
<name>RS6_BURO0</name>
<comment type="function">
    <text evidence="1">Binds together with bS18 to 16S ribosomal RNA.</text>
</comment>
<comment type="similarity">
    <text evidence="1">Belongs to the bacterial ribosomal protein bS6 family.</text>
</comment>
<organism>
    <name type="scientific">Burkholderia orbicola (strain MC0-3)</name>
    <dbReference type="NCBI Taxonomy" id="406425"/>
    <lineage>
        <taxon>Bacteria</taxon>
        <taxon>Pseudomonadati</taxon>
        <taxon>Pseudomonadota</taxon>
        <taxon>Betaproteobacteria</taxon>
        <taxon>Burkholderiales</taxon>
        <taxon>Burkholderiaceae</taxon>
        <taxon>Burkholderia</taxon>
        <taxon>Burkholderia cepacia complex</taxon>
        <taxon>Burkholderia orbicola</taxon>
    </lineage>
</organism>
<evidence type="ECO:0000255" key="1">
    <source>
        <dbReference type="HAMAP-Rule" id="MF_00360"/>
    </source>
</evidence>
<evidence type="ECO:0000256" key="2">
    <source>
        <dbReference type="SAM" id="MobiDB-lite"/>
    </source>
</evidence>
<evidence type="ECO:0000305" key="3"/>
<dbReference type="EMBL" id="CP000958">
    <property type="protein sequence ID" value="ACA91058.1"/>
    <property type="molecule type" value="Genomic_DNA"/>
</dbReference>
<dbReference type="RefSeq" id="WP_006486255.1">
    <property type="nucleotide sequence ID" value="NC_010508.1"/>
</dbReference>
<dbReference type="SMR" id="B1JTF3"/>
<dbReference type="GeneID" id="83048670"/>
<dbReference type="KEGG" id="bcm:Bcenmc03_1897"/>
<dbReference type="HOGENOM" id="CLU_113441_6_1_4"/>
<dbReference type="Proteomes" id="UP000002169">
    <property type="component" value="Chromosome 1"/>
</dbReference>
<dbReference type="GO" id="GO:0022627">
    <property type="term" value="C:cytosolic small ribosomal subunit"/>
    <property type="evidence" value="ECO:0007669"/>
    <property type="project" value="TreeGrafter"/>
</dbReference>
<dbReference type="GO" id="GO:0070181">
    <property type="term" value="F:small ribosomal subunit rRNA binding"/>
    <property type="evidence" value="ECO:0007669"/>
    <property type="project" value="TreeGrafter"/>
</dbReference>
<dbReference type="GO" id="GO:0003735">
    <property type="term" value="F:structural constituent of ribosome"/>
    <property type="evidence" value="ECO:0007669"/>
    <property type="project" value="InterPro"/>
</dbReference>
<dbReference type="GO" id="GO:0006412">
    <property type="term" value="P:translation"/>
    <property type="evidence" value="ECO:0007669"/>
    <property type="project" value="UniProtKB-UniRule"/>
</dbReference>
<dbReference type="CDD" id="cd00473">
    <property type="entry name" value="bS6"/>
    <property type="match status" value="1"/>
</dbReference>
<dbReference type="Gene3D" id="3.30.70.60">
    <property type="match status" value="1"/>
</dbReference>
<dbReference type="HAMAP" id="MF_00360">
    <property type="entry name" value="Ribosomal_bS6"/>
    <property type="match status" value="1"/>
</dbReference>
<dbReference type="InterPro" id="IPR000529">
    <property type="entry name" value="Ribosomal_bS6"/>
</dbReference>
<dbReference type="InterPro" id="IPR035980">
    <property type="entry name" value="Ribosomal_bS6_sf"/>
</dbReference>
<dbReference type="InterPro" id="IPR020814">
    <property type="entry name" value="Ribosomal_S6_plastid/chlpt"/>
</dbReference>
<dbReference type="InterPro" id="IPR014717">
    <property type="entry name" value="Transl_elong_EF1B/ribsomal_bS6"/>
</dbReference>
<dbReference type="NCBIfam" id="TIGR00166">
    <property type="entry name" value="S6"/>
    <property type="match status" value="1"/>
</dbReference>
<dbReference type="PANTHER" id="PTHR21011">
    <property type="entry name" value="MITOCHONDRIAL 28S RIBOSOMAL PROTEIN S6"/>
    <property type="match status" value="1"/>
</dbReference>
<dbReference type="PANTHER" id="PTHR21011:SF1">
    <property type="entry name" value="SMALL RIBOSOMAL SUBUNIT PROTEIN BS6M"/>
    <property type="match status" value="1"/>
</dbReference>
<dbReference type="Pfam" id="PF01250">
    <property type="entry name" value="Ribosomal_S6"/>
    <property type="match status" value="1"/>
</dbReference>
<dbReference type="SUPFAM" id="SSF54995">
    <property type="entry name" value="Ribosomal protein S6"/>
    <property type="match status" value="1"/>
</dbReference>